<organism evidence="2">
    <name type="scientific">High plains virus (isolate Idaho 97)</name>
    <dbReference type="NCBI Taxonomy" id="224783"/>
    <lineage>
        <taxon>Viruses</taxon>
        <taxon>Riboviria</taxon>
        <taxon>dsRNA viruses</taxon>
        <taxon>High Plains virus</taxon>
    </lineage>
</organism>
<organismHost>
    <name type="scientific">Hordeum vulgare</name>
    <name type="common">Barley</name>
    <dbReference type="NCBI Taxonomy" id="4513"/>
</organismHost>
<organismHost>
    <name type="scientific">Triticum aestivum</name>
    <name type="common">Wheat</name>
    <dbReference type="NCBI Taxonomy" id="4565"/>
</organismHost>
<organismHost>
    <name type="scientific">Zea mays</name>
    <name type="common">Maize</name>
    <dbReference type="NCBI Taxonomy" id="4577"/>
</organismHost>
<sequence>MALSFKNSSGVLKAKTLKDGFVTSSDIETTVHDFSYEKPDLSSVDGFSLKSLLSSDGWHIVVAYQSVTNSERLNNNKKNNKTQRFKLFTFDIIVIPGLKPNKSKNVVSYNRFMALCIGMICYHKKWKVFNWSNKRYEDNKNTINFNEDDDFMNKLAMSAGFSKEHKYHWFYSTGFEYTFDIFPAEVIAMSLFRWSHRVELKIKYEHESDLVAPMVRQVTKRGNISDVMDIVGKDIIAKKYEEIVKDRSSIGIGTKYNDILDEFKDIFNKIDSSSLDSTIKNCFNKIDGE</sequence>
<accession>P83549</accession>
<proteinExistence type="evidence at protein level"/>
<reference key="1">
    <citation type="journal article" date="2004" name="J. Biol. Chem.">
        <title>Characterization of the agent of 'high plains disease': mass spectrometry determines the sequence of the disease-specific protein.</title>
        <authorList>
            <person name="She Y.-M."/>
            <person name="Seifers D.L."/>
            <person name="Haber S."/>
            <person name="Ens W."/>
            <person name="Standing K.G."/>
        </authorList>
    </citation>
    <scope>PROTEIN SEQUENCE OF 2-289</scope>
    <scope>ACETYLATION AT ALA-2</scope>
    <scope>VARIANTS 54-SER--ASP-56 DELINS THR-SER-GLU; ASN-205; ASP-205; LEU-235; THR-235; 271-ASP--SER-273 DELINS ASN-SER-THR AND 286-ILE-ASP-287 DELINS THR</scope>
</reference>
<feature type="initiator methionine" description="Removed" evidence="1">
    <location>
        <position position="1"/>
    </location>
</feature>
<feature type="chain" id="PRO_0000222948" description="Capsid protein">
    <location>
        <begin position="2"/>
        <end position="289"/>
    </location>
</feature>
<feature type="modified residue" description="N-acetylalanine; by host" evidence="1">
    <location>
        <position position="2"/>
    </location>
</feature>
<feature type="sequence variant">
    <original>SSD</original>
    <variation>TSE</variation>
    <location>
        <begin position="54"/>
        <end position="56"/>
    </location>
</feature>
<feature type="sequence variant" evidence="1">
    <original>E</original>
    <variation>D</variation>
    <location>
        <position position="205"/>
    </location>
</feature>
<feature type="sequence variant" evidence="1">
    <original>E</original>
    <variation>N</variation>
    <location>
        <position position="205"/>
    </location>
</feature>
<feature type="sequence variant" evidence="1">
    <original>I</original>
    <variation>L</variation>
    <location>
        <position position="235"/>
    </location>
</feature>
<feature type="sequence variant" evidence="1">
    <original>I</original>
    <variation>T</variation>
    <location>
        <position position="235"/>
    </location>
</feature>
<feature type="sequence variant">
    <original>DSS</original>
    <variation>NST</variation>
    <location>
        <begin position="271"/>
        <end position="273"/>
    </location>
</feature>
<feature type="sequence variant" evidence="1">
    <original>ID</original>
    <variation>T</variation>
    <location>
        <begin position="286"/>
        <end position="287"/>
    </location>
</feature>
<keyword id="KW-0007">Acetylation</keyword>
<keyword id="KW-0167">Capsid protein</keyword>
<keyword id="KW-0903">Direct protein sequencing</keyword>
<keyword id="KW-0946">Virion</keyword>
<protein>
    <recommendedName>
        <fullName>Capsid protein</fullName>
    </recommendedName>
    <alternativeName>
        <fullName>Coat protein</fullName>
    </alternativeName>
</protein>
<comment type="subcellular location">
    <subcellularLocation>
        <location evidence="2">Virion</location>
    </subcellularLocation>
</comment>
<comment type="similarity">
    <text evidence="2">Belongs to the high plain virus capsid family.</text>
</comment>
<dbReference type="SMR" id="P83549"/>
<dbReference type="iPTMnet" id="P83549"/>
<dbReference type="GO" id="GO:0019028">
    <property type="term" value="C:viral capsid"/>
    <property type="evidence" value="ECO:0007669"/>
    <property type="project" value="UniProtKB-KW"/>
</dbReference>
<name>CAPSD_HPVID</name>
<evidence type="ECO:0000269" key="1">
    <source>
    </source>
</evidence>
<evidence type="ECO:0000305" key="2"/>